<keyword id="KW-0342">GTP-binding</keyword>
<keyword id="KW-0378">Hydrolase</keyword>
<keyword id="KW-0456">Lyase</keyword>
<keyword id="KW-0460">Magnesium</keyword>
<keyword id="KW-0464">Manganese</keyword>
<keyword id="KW-0479">Metal-binding</keyword>
<keyword id="KW-0511">Multifunctional enzyme</keyword>
<keyword id="KW-0547">Nucleotide-binding</keyword>
<keyword id="KW-0686">Riboflavin biosynthesis</keyword>
<keyword id="KW-0862">Zinc</keyword>
<sequence length="398" mass="44170">MFHPIEEALEALKKGEVIIVVDDEDRENEGDFVALAEHATPEVVNFMATHGRGLICTPLSEDIAGRLDLHPMVDHNTDSHETAFTVSIDHRLTKTGISAQERSFTIQALLNEESVSDDFQRPGHIFPLIAKKGGVLKRAGHTEAAVDLAKACGSQGAGVICEIMNEDGTMARVPELAEIAERHQLKMITIKDLIEYRYNITTLVNREVDITLPTDFGTFRVYGYTNEVDGKEHLAFVMGDVPFNSEPVLVRVHSECLTGDVFASHRCDCGPQLHAALAQIAEEGRGVLLYLRQEGRGIGLINKLKAYRLQEQGYDTVEANEALGFLPDLRNYGIGAQILRDLGVQHMKLLTNNPRKIAGLEGYGLSISERVPLQMEASEHNKQYLQTKMKKLGHLLHF</sequence>
<evidence type="ECO:0000255" key="1">
    <source>
        <dbReference type="HAMAP-Rule" id="MF_01283"/>
    </source>
</evidence>
<reference key="1">
    <citation type="journal article" date="2007" name="Nat. Biotechnol.">
        <title>Comparative analysis of the complete genome sequence of the plant growth-promoting bacterium Bacillus amyloliquefaciens FZB42.</title>
        <authorList>
            <person name="Chen X.H."/>
            <person name="Koumoutsi A."/>
            <person name="Scholz R."/>
            <person name="Eisenreich A."/>
            <person name="Schneider K."/>
            <person name="Heinemeyer I."/>
            <person name="Morgenstern B."/>
            <person name="Voss B."/>
            <person name="Hess W.R."/>
            <person name="Reva O."/>
            <person name="Junge H."/>
            <person name="Voigt B."/>
            <person name="Jungblut P.R."/>
            <person name="Vater J."/>
            <person name="Suessmuth R."/>
            <person name="Liesegang H."/>
            <person name="Strittmatter A."/>
            <person name="Gottschalk G."/>
            <person name="Borriss R."/>
        </authorList>
    </citation>
    <scope>NUCLEOTIDE SEQUENCE [LARGE SCALE GENOMIC DNA]</scope>
    <source>
        <strain>DSM 23117 / BGSC 10A6 / LMG 26770 / FZB42</strain>
    </source>
</reference>
<dbReference type="EC" id="4.1.99.12" evidence="1"/>
<dbReference type="EC" id="3.5.4.25" evidence="1"/>
<dbReference type="EMBL" id="CP000560">
    <property type="protein sequence ID" value="ABS74501.1"/>
    <property type="molecule type" value="Genomic_DNA"/>
</dbReference>
<dbReference type="RefSeq" id="WP_003153371.1">
    <property type="nucleotide sequence ID" value="NC_009725.2"/>
</dbReference>
<dbReference type="SMR" id="A7Z675"/>
<dbReference type="GeneID" id="93081276"/>
<dbReference type="KEGG" id="bay:RBAM_021400"/>
<dbReference type="HOGENOM" id="CLU_020273_1_2_9"/>
<dbReference type="UniPathway" id="UPA00275">
    <property type="reaction ID" value="UER00399"/>
</dbReference>
<dbReference type="UniPathway" id="UPA00275">
    <property type="reaction ID" value="UER00400"/>
</dbReference>
<dbReference type="Proteomes" id="UP000001120">
    <property type="component" value="Chromosome"/>
</dbReference>
<dbReference type="GO" id="GO:0005829">
    <property type="term" value="C:cytosol"/>
    <property type="evidence" value="ECO:0007669"/>
    <property type="project" value="TreeGrafter"/>
</dbReference>
<dbReference type="GO" id="GO:0008686">
    <property type="term" value="F:3,4-dihydroxy-2-butanone-4-phosphate synthase activity"/>
    <property type="evidence" value="ECO:0007669"/>
    <property type="project" value="UniProtKB-UniRule"/>
</dbReference>
<dbReference type="GO" id="GO:0005525">
    <property type="term" value="F:GTP binding"/>
    <property type="evidence" value="ECO:0007669"/>
    <property type="project" value="UniProtKB-KW"/>
</dbReference>
<dbReference type="GO" id="GO:0003935">
    <property type="term" value="F:GTP cyclohydrolase II activity"/>
    <property type="evidence" value="ECO:0007669"/>
    <property type="project" value="UniProtKB-UniRule"/>
</dbReference>
<dbReference type="GO" id="GO:0000287">
    <property type="term" value="F:magnesium ion binding"/>
    <property type="evidence" value="ECO:0007669"/>
    <property type="project" value="UniProtKB-UniRule"/>
</dbReference>
<dbReference type="GO" id="GO:0030145">
    <property type="term" value="F:manganese ion binding"/>
    <property type="evidence" value="ECO:0007669"/>
    <property type="project" value="UniProtKB-UniRule"/>
</dbReference>
<dbReference type="GO" id="GO:0008270">
    <property type="term" value="F:zinc ion binding"/>
    <property type="evidence" value="ECO:0007669"/>
    <property type="project" value="UniProtKB-UniRule"/>
</dbReference>
<dbReference type="GO" id="GO:0009231">
    <property type="term" value="P:riboflavin biosynthetic process"/>
    <property type="evidence" value="ECO:0007669"/>
    <property type="project" value="UniProtKB-UniRule"/>
</dbReference>
<dbReference type="CDD" id="cd00641">
    <property type="entry name" value="GTP_cyclohydro2"/>
    <property type="match status" value="1"/>
</dbReference>
<dbReference type="FunFam" id="3.40.50.10990:FF:000001">
    <property type="entry name" value="Riboflavin biosynthesis protein RibBA"/>
    <property type="match status" value="1"/>
</dbReference>
<dbReference type="FunFam" id="3.90.870.10:FF:000001">
    <property type="entry name" value="Riboflavin biosynthesis protein RibBA"/>
    <property type="match status" value="1"/>
</dbReference>
<dbReference type="Gene3D" id="3.90.870.10">
    <property type="entry name" value="DHBP synthase"/>
    <property type="match status" value="1"/>
</dbReference>
<dbReference type="Gene3D" id="3.40.50.10990">
    <property type="entry name" value="GTP cyclohydrolase II"/>
    <property type="match status" value="1"/>
</dbReference>
<dbReference type="HAMAP" id="MF_00179">
    <property type="entry name" value="RibA"/>
    <property type="match status" value="1"/>
</dbReference>
<dbReference type="HAMAP" id="MF_00180">
    <property type="entry name" value="RibB"/>
    <property type="match status" value="1"/>
</dbReference>
<dbReference type="HAMAP" id="MF_01283">
    <property type="entry name" value="RibBA"/>
    <property type="match status" value="1"/>
</dbReference>
<dbReference type="InterPro" id="IPR017945">
    <property type="entry name" value="DHBP_synth_RibB-like_a/b_dom"/>
</dbReference>
<dbReference type="InterPro" id="IPR000422">
    <property type="entry name" value="DHBP_synthase_RibB"/>
</dbReference>
<dbReference type="InterPro" id="IPR032677">
    <property type="entry name" value="GTP_cyclohydro_II"/>
</dbReference>
<dbReference type="InterPro" id="IPR000926">
    <property type="entry name" value="RibA"/>
</dbReference>
<dbReference type="InterPro" id="IPR036144">
    <property type="entry name" value="RibA-like_sf"/>
</dbReference>
<dbReference type="InterPro" id="IPR016299">
    <property type="entry name" value="Riboflavin_synth_RibBA"/>
</dbReference>
<dbReference type="NCBIfam" id="NF001591">
    <property type="entry name" value="PRK00393.1"/>
    <property type="match status" value="1"/>
</dbReference>
<dbReference type="NCBIfam" id="NF006803">
    <property type="entry name" value="PRK09311.1"/>
    <property type="match status" value="1"/>
</dbReference>
<dbReference type="NCBIfam" id="TIGR00505">
    <property type="entry name" value="ribA"/>
    <property type="match status" value="1"/>
</dbReference>
<dbReference type="NCBIfam" id="TIGR00506">
    <property type="entry name" value="ribB"/>
    <property type="match status" value="1"/>
</dbReference>
<dbReference type="PANTHER" id="PTHR21327:SF18">
    <property type="entry name" value="3,4-DIHYDROXY-2-BUTANONE 4-PHOSPHATE SYNTHASE"/>
    <property type="match status" value="1"/>
</dbReference>
<dbReference type="PANTHER" id="PTHR21327">
    <property type="entry name" value="GTP CYCLOHYDROLASE II-RELATED"/>
    <property type="match status" value="1"/>
</dbReference>
<dbReference type="Pfam" id="PF00926">
    <property type="entry name" value="DHBP_synthase"/>
    <property type="match status" value="1"/>
</dbReference>
<dbReference type="Pfam" id="PF00925">
    <property type="entry name" value="GTP_cyclohydro2"/>
    <property type="match status" value="1"/>
</dbReference>
<dbReference type="PIRSF" id="PIRSF001259">
    <property type="entry name" value="RibA"/>
    <property type="match status" value="1"/>
</dbReference>
<dbReference type="SUPFAM" id="SSF142695">
    <property type="entry name" value="RibA-like"/>
    <property type="match status" value="1"/>
</dbReference>
<dbReference type="SUPFAM" id="SSF55821">
    <property type="entry name" value="YrdC/RibB"/>
    <property type="match status" value="1"/>
</dbReference>
<organism>
    <name type="scientific">Bacillus velezensis (strain DSM 23117 / BGSC 10A6 / LMG 26770 / FZB42)</name>
    <name type="common">Bacillus amyloliquefaciens subsp. plantarum</name>
    <dbReference type="NCBI Taxonomy" id="326423"/>
    <lineage>
        <taxon>Bacteria</taxon>
        <taxon>Bacillati</taxon>
        <taxon>Bacillota</taxon>
        <taxon>Bacilli</taxon>
        <taxon>Bacillales</taxon>
        <taxon>Bacillaceae</taxon>
        <taxon>Bacillus</taxon>
        <taxon>Bacillus amyloliquefaciens group</taxon>
    </lineage>
</organism>
<accession>A7Z675</accession>
<gene>
    <name evidence="1" type="primary">ribBA</name>
    <name type="ordered locus">RBAM_021400</name>
</gene>
<protein>
    <recommendedName>
        <fullName evidence="1">Riboflavin biosynthesis protein RibBA</fullName>
    </recommendedName>
    <domain>
        <recommendedName>
            <fullName evidence="1">3,4-dihydroxy-2-butanone 4-phosphate synthase</fullName>
            <shortName evidence="1">DHBP synthase</shortName>
            <ecNumber evidence="1">4.1.99.12</ecNumber>
        </recommendedName>
    </domain>
    <domain>
        <recommendedName>
            <fullName evidence="1">GTP cyclohydrolase-2</fullName>
            <ecNumber evidence="1">3.5.4.25</ecNumber>
        </recommendedName>
        <alternativeName>
            <fullName evidence="1">GTP cyclohydrolase II</fullName>
        </alternativeName>
    </domain>
</protein>
<feature type="chain" id="PRO_1000067413" description="Riboflavin biosynthesis protein RibBA">
    <location>
        <begin position="1"/>
        <end position="398"/>
    </location>
</feature>
<feature type="region of interest" description="DHBP synthase">
    <location>
        <begin position="1"/>
        <end position="199"/>
    </location>
</feature>
<feature type="region of interest" description="GTP cyclohydrolase II">
    <location>
        <begin position="200"/>
        <end position="398"/>
    </location>
</feature>
<feature type="active site" description="Proton acceptor; for GTP cyclohydrolase activity" evidence="1">
    <location>
        <position position="328"/>
    </location>
</feature>
<feature type="active site" description="Nucleophile; for GTP cyclohydrolase activity" evidence="1">
    <location>
        <position position="330"/>
    </location>
</feature>
<feature type="binding site" evidence="1">
    <location>
        <begin position="26"/>
        <end position="27"/>
    </location>
    <ligand>
        <name>D-ribulose 5-phosphate</name>
        <dbReference type="ChEBI" id="CHEBI:58121"/>
    </ligand>
</feature>
<feature type="binding site" evidence="1">
    <location>
        <position position="27"/>
    </location>
    <ligand>
        <name>Mg(2+)</name>
        <dbReference type="ChEBI" id="CHEBI:18420"/>
        <label>1</label>
    </ligand>
</feature>
<feature type="binding site" evidence="1">
    <location>
        <position position="27"/>
    </location>
    <ligand>
        <name>Mg(2+)</name>
        <dbReference type="ChEBI" id="CHEBI:18420"/>
        <label>2</label>
    </ligand>
</feature>
<feature type="binding site" evidence="1">
    <location>
        <position position="31"/>
    </location>
    <ligand>
        <name>D-ribulose 5-phosphate</name>
        <dbReference type="ChEBI" id="CHEBI:58121"/>
    </ligand>
</feature>
<feature type="binding site" evidence="1">
    <location>
        <begin position="138"/>
        <end position="142"/>
    </location>
    <ligand>
        <name>D-ribulose 5-phosphate</name>
        <dbReference type="ChEBI" id="CHEBI:58121"/>
    </ligand>
</feature>
<feature type="binding site" evidence="1">
    <location>
        <position position="141"/>
    </location>
    <ligand>
        <name>Mg(2+)</name>
        <dbReference type="ChEBI" id="CHEBI:18420"/>
        <label>2</label>
    </ligand>
</feature>
<feature type="binding site" evidence="1">
    <location>
        <position position="162"/>
    </location>
    <ligand>
        <name>D-ribulose 5-phosphate</name>
        <dbReference type="ChEBI" id="CHEBI:58121"/>
    </ligand>
</feature>
<feature type="binding site" evidence="1">
    <location>
        <begin position="251"/>
        <end position="255"/>
    </location>
    <ligand>
        <name>GTP</name>
        <dbReference type="ChEBI" id="CHEBI:37565"/>
    </ligand>
</feature>
<feature type="binding site" evidence="1">
    <location>
        <position position="256"/>
    </location>
    <ligand>
        <name>Zn(2+)</name>
        <dbReference type="ChEBI" id="CHEBI:29105"/>
        <note>catalytic</note>
    </ligand>
</feature>
<feature type="binding site" evidence="1">
    <location>
        <position position="267"/>
    </location>
    <ligand>
        <name>Zn(2+)</name>
        <dbReference type="ChEBI" id="CHEBI:29105"/>
        <note>catalytic</note>
    </ligand>
</feature>
<feature type="binding site" evidence="1">
    <location>
        <position position="269"/>
    </location>
    <ligand>
        <name>Zn(2+)</name>
        <dbReference type="ChEBI" id="CHEBI:29105"/>
        <note>catalytic</note>
    </ligand>
</feature>
<feature type="binding site" evidence="1">
    <location>
        <position position="272"/>
    </location>
    <ligand>
        <name>GTP</name>
        <dbReference type="ChEBI" id="CHEBI:37565"/>
    </ligand>
</feature>
<feature type="binding site" evidence="1">
    <location>
        <begin position="294"/>
        <end position="296"/>
    </location>
    <ligand>
        <name>GTP</name>
        <dbReference type="ChEBI" id="CHEBI:37565"/>
    </ligand>
</feature>
<feature type="binding site" evidence="1">
    <location>
        <position position="316"/>
    </location>
    <ligand>
        <name>GTP</name>
        <dbReference type="ChEBI" id="CHEBI:37565"/>
    </ligand>
</feature>
<feature type="binding site" evidence="1">
    <location>
        <position position="351"/>
    </location>
    <ligand>
        <name>GTP</name>
        <dbReference type="ChEBI" id="CHEBI:37565"/>
    </ligand>
</feature>
<feature type="binding site" evidence="1">
    <location>
        <position position="356"/>
    </location>
    <ligand>
        <name>GTP</name>
        <dbReference type="ChEBI" id="CHEBI:37565"/>
    </ligand>
</feature>
<feature type="site" description="Essential for DHBP synthase activity" evidence="1">
    <location>
        <position position="124"/>
    </location>
</feature>
<feature type="site" description="Essential for DHBP synthase activity" evidence="1">
    <location>
        <position position="162"/>
    </location>
</feature>
<comment type="function">
    <text evidence="1">Catalyzes the conversion of D-ribulose 5-phosphate to formate and 3,4-dihydroxy-2-butanone 4-phosphate.</text>
</comment>
<comment type="function">
    <text evidence="1">Catalyzes the conversion of GTP to 2,5-diamino-6-ribosylamino-4(3H)-pyrimidinone 5'-phosphate (DARP), formate and pyrophosphate.</text>
</comment>
<comment type="catalytic activity">
    <reaction evidence="1">
        <text>D-ribulose 5-phosphate = (2S)-2-hydroxy-3-oxobutyl phosphate + formate + H(+)</text>
        <dbReference type="Rhea" id="RHEA:18457"/>
        <dbReference type="ChEBI" id="CHEBI:15378"/>
        <dbReference type="ChEBI" id="CHEBI:15740"/>
        <dbReference type="ChEBI" id="CHEBI:58121"/>
        <dbReference type="ChEBI" id="CHEBI:58830"/>
        <dbReference type="EC" id="4.1.99.12"/>
    </reaction>
</comment>
<comment type="catalytic activity">
    <reaction evidence="1">
        <text>GTP + 4 H2O = 2,5-diamino-6-hydroxy-4-(5-phosphoribosylamino)-pyrimidine + formate + 2 phosphate + 3 H(+)</text>
        <dbReference type="Rhea" id="RHEA:23704"/>
        <dbReference type="ChEBI" id="CHEBI:15377"/>
        <dbReference type="ChEBI" id="CHEBI:15378"/>
        <dbReference type="ChEBI" id="CHEBI:15740"/>
        <dbReference type="ChEBI" id="CHEBI:37565"/>
        <dbReference type="ChEBI" id="CHEBI:43474"/>
        <dbReference type="ChEBI" id="CHEBI:58614"/>
        <dbReference type="EC" id="3.5.4.25"/>
    </reaction>
</comment>
<comment type="cofactor">
    <cofactor evidence="1">
        <name>Mg(2+)</name>
        <dbReference type="ChEBI" id="CHEBI:18420"/>
    </cofactor>
    <cofactor evidence="1">
        <name>Mn(2+)</name>
        <dbReference type="ChEBI" id="CHEBI:29035"/>
    </cofactor>
    <text evidence="1">Binds 2 divalent metal cations per subunit. Magnesium or manganese.</text>
</comment>
<comment type="cofactor">
    <cofactor evidence="1">
        <name>Zn(2+)</name>
        <dbReference type="ChEBI" id="CHEBI:29105"/>
    </cofactor>
    <text evidence="1">Binds 1 zinc ion per subunit.</text>
</comment>
<comment type="pathway">
    <text evidence="1">Cofactor biosynthesis; riboflavin biosynthesis; 2-hydroxy-3-oxobutyl phosphate from D-ribulose 5-phosphate: step 1/1.</text>
</comment>
<comment type="pathway">
    <text evidence="1">Cofactor biosynthesis; riboflavin biosynthesis; 5-amino-6-(D-ribitylamino)uracil from GTP: step 1/4.</text>
</comment>
<comment type="similarity">
    <text evidence="1">In the N-terminal section; belongs to the DHBP synthase family.</text>
</comment>
<comment type="similarity">
    <text evidence="1">In the C-terminal section; belongs to the GTP cyclohydrolase II family.</text>
</comment>
<name>RIBBA_BACVZ</name>
<proteinExistence type="inferred from homology"/>